<keyword id="KW-0002">3D-structure</keyword>
<keyword id="KW-0227">DNA damage</keyword>
<keyword id="KW-0234">DNA repair</keyword>
<keyword id="KW-0235">DNA replication</keyword>
<keyword id="KW-0238">DNA-binding</keyword>
<keyword id="KW-0479">Metal-binding</keyword>
<keyword id="KW-1185">Reference proteome</keyword>
<keyword id="KW-0677">Repeat</keyword>
<keyword id="KW-0862">Zinc</keyword>
<keyword id="KW-0863">Zinc-finger</keyword>
<feature type="chain" id="PRO_0000429010" description="Replication factor A">
    <location>
        <begin position="1"/>
        <end position="792"/>
    </location>
</feature>
<feature type="DNA-binding region" description="OB 1">
    <location>
        <begin position="81"/>
        <end position="140"/>
    </location>
</feature>
<feature type="DNA-binding region" description="OB 2">
    <location>
        <begin position="192"/>
        <end position="273"/>
    </location>
</feature>
<feature type="DNA-binding region" description="OB 3">
    <location>
        <begin position="301"/>
        <end position="365"/>
    </location>
</feature>
<feature type="DNA-binding region" description="OB 4">
    <location>
        <begin position="422"/>
        <end position="494"/>
    </location>
</feature>
<feature type="zinc finger region" description="C4-type" evidence="1">
    <location>
        <begin position="678"/>
        <end position="696"/>
    </location>
</feature>
<feature type="turn" evidence="5">
    <location>
        <begin position="70"/>
        <end position="72"/>
    </location>
</feature>
<feature type="strand" evidence="5">
    <location>
        <begin position="78"/>
        <end position="88"/>
    </location>
</feature>
<feature type="strand" evidence="5">
    <location>
        <begin position="103"/>
        <end position="111"/>
    </location>
</feature>
<feature type="strand" evidence="5">
    <location>
        <begin position="114"/>
        <end position="121"/>
    </location>
</feature>
<feature type="helix" evidence="5">
    <location>
        <begin position="124"/>
        <end position="129"/>
    </location>
</feature>
<feature type="strand" evidence="5">
    <location>
        <begin position="135"/>
        <end position="144"/>
    </location>
</feature>
<feature type="strand" evidence="5">
    <location>
        <begin position="148"/>
        <end position="151"/>
    </location>
</feature>
<feature type="strand" evidence="5">
    <location>
        <begin position="153"/>
        <end position="156"/>
    </location>
</feature>
<feature type="strand" evidence="5">
    <location>
        <begin position="162"/>
        <end position="167"/>
    </location>
</feature>
<gene>
    <name type="primary">rpa</name>
    <name type="ordered locus">MTH_1384/MTH_1385</name>
</gene>
<accession>O27438</accession>
<accession>O27437</accession>
<comment type="function">
    <text evidence="2 3">Inhibits DNA polymerase activity of PolB, which can be overcome by RFC and PNCA. Stimulates 3'-to 5'-exonuclease activity of PolB at 30 degrees Celsius, but has no effect at 50 or 70 degrees Celsius. Bind ssDNA and replication forks; replication forks structures bind both Hel308 and this protein. Has no effect on helicase activity of Hel308; may help target the helicase to DNA substrates that require DNA re-modeling.</text>
</comment>
<comment type="subunit">
    <text evidence="2 3">Probably binds DNA polymerase PolB. Binds helicase Hel308, in presence and absence of DNA.</text>
</comment>
<comment type="sequence caution" evidence="4">
    <conflict type="erroneous initiation">
        <sequence resource="EMBL-CDS" id="AAB85861"/>
    </conflict>
    <text>Truncated N-terminus.</text>
</comment>
<comment type="sequence caution" evidence="4">
    <conflict type="frameshift">
        <sequence resource="EMBL-CDS" id="AAB85862"/>
    </conflict>
</comment>
<reference key="1">
    <citation type="journal article" date="1997" name="J. Bacteriol.">
        <title>Complete genome sequence of Methanobacterium thermoautotrophicum deltaH: functional analysis and comparative genomics.</title>
        <authorList>
            <person name="Smith D.R."/>
            <person name="Doucette-Stamm L.A."/>
            <person name="Deloughery C."/>
            <person name="Lee H.-M."/>
            <person name="Dubois J."/>
            <person name="Aldredge T."/>
            <person name="Bashirzadeh R."/>
            <person name="Blakely D."/>
            <person name="Cook R."/>
            <person name="Gilbert K."/>
            <person name="Harrison D."/>
            <person name="Hoang L."/>
            <person name="Keagle P."/>
            <person name="Lumm W."/>
            <person name="Pothier B."/>
            <person name="Qiu D."/>
            <person name="Spadafora R."/>
            <person name="Vicare R."/>
            <person name="Wang Y."/>
            <person name="Wierzbowski J."/>
            <person name="Gibson R."/>
            <person name="Jiwani N."/>
            <person name="Caruso A."/>
            <person name="Bush D."/>
            <person name="Safer H."/>
            <person name="Patwell D."/>
            <person name="Prabhakar S."/>
            <person name="McDougall S."/>
            <person name="Shimer G."/>
            <person name="Goyal A."/>
            <person name="Pietrovski S."/>
            <person name="Church G.M."/>
            <person name="Daniels C.J."/>
            <person name="Mao J.-I."/>
            <person name="Rice P."/>
            <person name="Noelling J."/>
            <person name="Reeve J.N."/>
        </authorList>
    </citation>
    <scope>NUCLEOTIDE SEQUENCE [LARGE SCALE GENOMIC DNA]</scope>
    <source>
        <strain>ATCC 29096 / DSM 1053 / JCM 10044 / NBRC 100330 / Delta H</strain>
    </source>
</reference>
<reference key="2">
    <citation type="journal article" date="1999" name="J. Biol. Chem.">
        <title>Isolation and characterization of a split B-type DNA polymerase from the archaeon Methanobacterium thermoautotrophicum deltaH.</title>
        <authorList>
            <person name="Kelman Z."/>
            <person name="Pietrokovski S."/>
            <person name="Hurwitz J."/>
        </authorList>
    </citation>
    <scope>SEQUENCE REVISION TO 614</scope>
    <scope>FUNCTION</scope>
    <scope>SUBUNIT</scope>
    <source>
        <strain>ATCC 29096 / DSM 1053 / JCM 10044 / NBRC 100330 / Delta H</strain>
    </source>
</reference>
<reference key="3">
    <citation type="journal article" date="2011" name="DNA Repair">
        <title>Physical interaction between archaeal DNA repair helicase Hel308 and replication protein A (RPA).</title>
        <authorList>
            <person name="Woodman I.L."/>
            <person name="Brammer K."/>
            <person name="Bolt E.L."/>
        </authorList>
    </citation>
    <scope>FUNCTION</scope>
    <scope>INTERACTION WITH HEL308</scope>
    <scope>SUBUNIT</scope>
    <scope>DNA-BINDING</scope>
</reference>
<reference key="4">
    <citation type="submission" date="2008-06" db="PDB data bank">
        <title>Solution NMR Structure of the replication factor A related protein from Methanobacterium thermoautotrophicum. Northeast structural genomics target TR91A.</title>
        <authorList>
            <person name="Rossi P."/>
            <person name="Xiao R."/>
            <person name="Acton T.B."/>
            <person name="Montelione G.T."/>
        </authorList>
    </citation>
    <scope>STRUCTURE BY NMR OF 62-167</scope>
</reference>
<protein>
    <recommendedName>
        <fullName>Replication factor A</fullName>
        <shortName>RF-A</shortName>
        <shortName>RP-A</shortName>
        <shortName>RPA</shortName>
    </recommendedName>
    <alternativeName>
        <fullName>Replication factor A protein 1</fullName>
    </alternativeName>
    <alternativeName>
        <fullName>Replication protein A</fullName>
    </alternativeName>
    <alternativeName>
        <fullName>Single-stranded DNA-binding protein</fullName>
    </alternativeName>
</protein>
<proteinExistence type="evidence at protein level"/>
<sequence>MKEELKREYERIKDRISPEEFEELIEKKKEELGDIGFMDDLTIASTVVDDILKEKNTMLSEKPEHRMDTISKLEEGAETPVTGRVMKISSPRTFTTRKGREGKLANVIIADDTGELRAVFWTENIKLLKKFREGDVIRIKDVNIRGGFGGRKEAHLMPRSTVEVLDPEDYPEFPEYREEITPIGDLVEDDEVNVIARITGVSRVRTFERDGREGRFISLDIMDATGSTTYTLWNNDVNLVEELGLKEGDAVKILWAQPRRRDDKVTLTHTSLTRVVPGEYDVPEFREELVKIGDLHEMRNVTVMGLVTKVNDPVEFERNDGTTGSVKSIEIADDTGSARVTLWDEDTRIKINKGDIIRISGANVEFDDFNQSYRINTNFNTRITLNPESDGALLKVLEEYREQMRPMKISEILEMEDEGEEVDVVGRIFSLSDPREFEREDGTGIVRSMELADETGKIRISLWDEKAEKPMNIGDAVRIENARIRLGLYSVELSAGRTTRIVNPLPEDMEDLPSFEELEEMLYQTKKIADLEEDDRNIRIIARVVDLFEPREFQRGDGTPGLVRTAEFADDTGSIRASLWDDAAEKPLSIGDPVKIENPRVVFRDDMGGGRLELSIGNSSRIEPASERDLEGLPSFDELQEMLYPHRDIADLDEDSRNVLIEGELIEMSGRRILSIKCPSCNERLDLSDENICNFCGELVDEPRYLLMIPGRIMDDTGEVMITFFGREAESILEMTTDEVVNIINQSADESALEERVEDLNGVTVRVIGNADMDVYSEELRFIPRKVVKKEL</sequence>
<dbReference type="EMBL" id="AE000666">
    <property type="protein sequence ID" value="AAB85861.1"/>
    <property type="status" value="ALT_INIT"/>
    <property type="molecule type" value="Genomic_DNA"/>
</dbReference>
<dbReference type="EMBL" id="AE000666">
    <property type="protein sequence ID" value="AAB85862.1"/>
    <property type="status" value="ALT_FRAME"/>
    <property type="molecule type" value="Genomic_DNA"/>
</dbReference>
<dbReference type="PIR" id="C69051">
    <property type="entry name" value="C69051"/>
</dbReference>
<dbReference type="RefSeq" id="WP_010876996.1">
    <property type="nucleotide sequence ID" value="NC_000916.1"/>
</dbReference>
<dbReference type="RefSeq" id="WP_010876997.1">
    <property type="nucleotide sequence ID" value="NC_000916.1"/>
</dbReference>
<dbReference type="PDB" id="2K50">
    <property type="method" value="NMR"/>
    <property type="chains" value="A=62-167"/>
</dbReference>
<dbReference type="PDBsum" id="2K50"/>
<dbReference type="SMR" id="O27438"/>
<dbReference type="FunCoup" id="O27438">
    <property type="interactions" value="13"/>
</dbReference>
<dbReference type="STRING" id="187420.MTH_1385"/>
<dbReference type="PaxDb" id="187420-MTH_1385"/>
<dbReference type="DNASU" id="1471102"/>
<dbReference type="EnsemblBacteria" id="AAB85861">
    <property type="protein sequence ID" value="AAB85861"/>
    <property type="gene ID" value="MTH_1384"/>
</dbReference>
<dbReference type="EnsemblBacteria" id="AAB85862">
    <property type="protein sequence ID" value="AAB85862"/>
    <property type="gene ID" value="MTH_1385"/>
</dbReference>
<dbReference type="KEGG" id="mth:MTH_1384"/>
<dbReference type="KEGG" id="mth:MTH_1385"/>
<dbReference type="PATRIC" id="fig|187420.15.peg.1350"/>
<dbReference type="HOGENOM" id="CLU_1485916_0_0_2"/>
<dbReference type="InParanoid" id="O27438"/>
<dbReference type="EvolutionaryTrace" id="O27438"/>
<dbReference type="Proteomes" id="UP000005223">
    <property type="component" value="Chromosome"/>
</dbReference>
<dbReference type="GO" id="GO:0003677">
    <property type="term" value="F:DNA binding"/>
    <property type="evidence" value="ECO:0007669"/>
    <property type="project" value="UniProtKB-KW"/>
</dbReference>
<dbReference type="GO" id="GO:0008270">
    <property type="term" value="F:zinc ion binding"/>
    <property type="evidence" value="ECO:0007669"/>
    <property type="project" value="UniProtKB-KW"/>
</dbReference>
<dbReference type="GO" id="GO:0006260">
    <property type="term" value="P:DNA replication"/>
    <property type="evidence" value="ECO:0007669"/>
    <property type="project" value="UniProtKB-KW"/>
</dbReference>
<dbReference type="GO" id="GO:0000724">
    <property type="term" value="P:double-strand break repair via homologous recombination"/>
    <property type="evidence" value="ECO:0007669"/>
    <property type="project" value="TreeGrafter"/>
</dbReference>
<dbReference type="GO" id="GO:0010212">
    <property type="term" value="P:response to ionizing radiation"/>
    <property type="evidence" value="ECO:0007669"/>
    <property type="project" value="TreeGrafter"/>
</dbReference>
<dbReference type="CDD" id="cd04491">
    <property type="entry name" value="SoSSB_OBF"/>
    <property type="match status" value="5"/>
</dbReference>
<dbReference type="Gene3D" id="2.40.50.140">
    <property type="entry name" value="Nucleic acid-binding proteins"/>
    <property type="match status" value="6"/>
</dbReference>
<dbReference type="InterPro" id="IPR035203">
    <property type="entry name" value="Cdc24_OB3"/>
</dbReference>
<dbReference type="InterPro" id="IPR012340">
    <property type="entry name" value="NA-bd_OB-fold"/>
</dbReference>
<dbReference type="InterPro" id="IPR004365">
    <property type="entry name" value="NA-bd_OB_tRNA"/>
</dbReference>
<dbReference type="InterPro" id="IPR013955">
    <property type="entry name" value="Rep_factor-A_C"/>
</dbReference>
<dbReference type="InterPro" id="IPR051231">
    <property type="entry name" value="SOSS-B"/>
</dbReference>
<dbReference type="NCBIfam" id="NF009030">
    <property type="entry name" value="PRK12366.1-1"/>
    <property type="match status" value="1"/>
</dbReference>
<dbReference type="PANTHER" id="PTHR13356">
    <property type="entry name" value="OB FOLD NUCLEIC ACID BINDING PROTEIN-RELATED"/>
    <property type="match status" value="1"/>
</dbReference>
<dbReference type="PANTHER" id="PTHR13356:SF10">
    <property type="entry name" value="REPLICATION FACTOR-A PROTEIN 1"/>
    <property type="match status" value="1"/>
</dbReference>
<dbReference type="Pfam" id="PF17244">
    <property type="entry name" value="CDC24_OB3"/>
    <property type="match status" value="1"/>
</dbReference>
<dbReference type="Pfam" id="PF08646">
    <property type="entry name" value="Rep_fac-A_C"/>
    <property type="match status" value="1"/>
</dbReference>
<dbReference type="Pfam" id="PF01336">
    <property type="entry name" value="tRNA_anti-codon"/>
    <property type="match status" value="1"/>
</dbReference>
<dbReference type="SUPFAM" id="SSF50249">
    <property type="entry name" value="Nucleic acid-binding proteins"/>
    <property type="match status" value="6"/>
</dbReference>
<organism>
    <name type="scientific">Methanothermobacter thermautotrophicus (strain ATCC 29096 / DSM 1053 / JCM 10044 / NBRC 100330 / Delta H)</name>
    <name type="common">Methanobacterium thermoautotrophicum</name>
    <dbReference type="NCBI Taxonomy" id="187420"/>
    <lineage>
        <taxon>Archaea</taxon>
        <taxon>Methanobacteriati</taxon>
        <taxon>Methanobacteriota</taxon>
        <taxon>Methanomada group</taxon>
        <taxon>Methanobacteria</taxon>
        <taxon>Methanobacteriales</taxon>
        <taxon>Methanobacteriaceae</taxon>
        <taxon>Methanothermobacter</taxon>
    </lineage>
</organism>
<evidence type="ECO:0000255" key="1"/>
<evidence type="ECO:0000269" key="2">
    <source>
    </source>
</evidence>
<evidence type="ECO:0000269" key="3">
    <source>
    </source>
</evidence>
<evidence type="ECO:0000305" key="4"/>
<evidence type="ECO:0007829" key="5">
    <source>
        <dbReference type="PDB" id="2K50"/>
    </source>
</evidence>
<name>RPA_METTH</name>